<reference key="1">
    <citation type="submission" date="2006-09" db="EMBL/GenBank/DDBJ databases">
        <title>Complete sequence of chromosome 1 of Shewanella sp. ANA-3.</title>
        <authorList>
            <person name="Copeland A."/>
            <person name="Lucas S."/>
            <person name="Lapidus A."/>
            <person name="Barry K."/>
            <person name="Detter J.C."/>
            <person name="Glavina del Rio T."/>
            <person name="Hammon N."/>
            <person name="Israni S."/>
            <person name="Dalin E."/>
            <person name="Tice H."/>
            <person name="Pitluck S."/>
            <person name="Chertkov O."/>
            <person name="Brettin T."/>
            <person name="Bruce D."/>
            <person name="Han C."/>
            <person name="Tapia R."/>
            <person name="Gilna P."/>
            <person name="Schmutz J."/>
            <person name="Larimer F."/>
            <person name="Land M."/>
            <person name="Hauser L."/>
            <person name="Kyrpides N."/>
            <person name="Kim E."/>
            <person name="Newman D."/>
            <person name="Salticov C."/>
            <person name="Konstantinidis K."/>
            <person name="Klappenback J."/>
            <person name="Tiedje J."/>
            <person name="Richardson P."/>
        </authorList>
    </citation>
    <scope>NUCLEOTIDE SEQUENCE [LARGE SCALE GENOMIC DNA]</scope>
    <source>
        <strain>ANA-3</strain>
    </source>
</reference>
<dbReference type="EC" id="1.17.7.3" evidence="1"/>
<dbReference type="EMBL" id="CP000469">
    <property type="protein sequence ID" value="ABK47464.1"/>
    <property type="molecule type" value="Genomic_DNA"/>
</dbReference>
<dbReference type="RefSeq" id="WP_011622016.1">
    <property type="nucleotide sequence ID" value="NC_008577.1"/>
</dbReference>
<dbReference type="SMR" id="A0KUJ5"/>
<dbReference type="STRING" id="94122.Shewana3_1229"/>
<dbReference type="GeneID" id="94727240"/>
<dbReference type="KEGG" id="shn:Shewana3_1229"/>
<dbReference type="eggNOG" id="COG0821">
    <property type="taxonomic scope" value="Bacteria"/>
</dbReference>
<dbReference type="HOGENOM" id="CLU_042258_0_0_6"/>
<dbReference type="OrthoDB" id="9803214at2"/>
<dbReference type="UniPathway" id="UPA00056">
    <property type="reaction ID" value="UER00096"/>
</dbReference>
<dbReference type="Proteomes" id="UP000002589">
    <property type="component" value="Chromosome"/>
</dbReference>
<dbReference type="GO" id="GO:0051539">
    <property type="term" value="F:4 iron, 4 sulfur cluster binding"/>
    <property type="evidence" value="ECO:0007669"/>
    <property type="project" value="UniProtKB-UniRule"/>
</dbReference>
<dbReference type="GO" id="GO:0046429">
    <property type="term" value="F:4-hydroxy-3-methylbut-2-en-1-yl diphosphate synthase activity (ferredoxin)"/>
    <property type="evidence" value="ECO:0007669"/>
    <property type="project" value="UniProtKB-UniRule"/>
</dbReference>
<dbReference type="GO" id="GO:0141197">
    <property type="term" value="F:4-hydroxy-3-methylbut-2-enyl-diphosphate synthase activity (flavodoxin)"/>
    <property type="evidence" value="ECO:0007669"/>
    <property type="project" value="UniProtKB-EC"/>
</dbReference>
<dbReference type="GO" id="GO:0005506">
    <property type="term" value="F:iron ion binding"/>
    <property type="evidence" value="ECO:0007669"/>
    <property type="project" value="InterPro"/>
</dbReference>
<dbReference type="GO" id="GO:0019288">
    <property type="term" value="P:isopentenyl diphosphate biosynthetic process, methylerythritol 4-phosphate pathway"/>
    <property type="evidence" value="ECO:0007669"/>
    <property type="project" value="UniProtKB-UniRule"/>
</dbReference>
<dbReference type="GO" id="GO:0016114">
    <property type="term" value="P:terpenoid biosynthetic process"/>
    <property type="evidence" value="ECO:0007669"/>
    <property type="project" value="InterPro"/>
</dbReference>
<dbReference type="FunFam" id="3.20.20.20:FF:000001">
    <property type="entry name" value="4-hydroxy-3-methylbut-2-en-1-yl diphosphate synthase (flavodoxin)"/>
    <property type="match status" value="1"/>
</dbReference>
<dbReference type="FunFam" id="3.30.413.10:FF:000002">
    <property type="entry name" value="4-hydroxy-3-methylbut-2-en-1-yl diphosphate synthase (flavodoxin)"/>
    <property type="match status" value="1"/>
</dbReference>
<dbReference type="Gene3D" id="3.20.20.20">
    <property type="entry name" value="Dihydropteroate synthase-like"/>
    <property type="match status" value="1"/>
</dbReference>
<dbReference type="Gene3D" id="3.30.413.10">
    <property type="entry name" value="Sulfite Reductase Hemoprotein, domain 1"/>
    <property type="match status" value="1"/>
</dbReference>
<dbReference type="HAMAP" id="MF_00159">
    <property type="entry name" value="IspG"/>
    <property type="match status" value="1"/>
</dbReference>
<dbReference type="InterPro" id="IPR011005">
    <property type="entry name" value="Dihydropteroate_synth-like_sf"/>
</dbReference>
<dbReference type="InterPro" id="IPR016425">
    <property type="entry name" value="IspG_bac"/>
</dbReference>
<dbReference type="InterPro" id="IPR004588">
    <property type="entry name" value="IspG_bac-typ"/>
</dbReference>
<dbReference type="InterPro" id="IPR045854">
    <property type="entry name" value="NO2/SO3_Rdtase_4Fe4S_sf"/>
</dbReference>
<dbReference type="NCBIfam" id="TIGR00612">
    <property type="entry name" value="ispG_gcpE"/>
    <property type="match status" value="1"/>
</dbReference>
<dbReference type="NCBIfam" id="NF001540">
    <property type="entry name" value="PRK00366.1"/>
    <property type="match status" value="1"/>
</dbReference>
<dbReference type="PANTHER" id="PTHR30454">
    <property type="entry name" value="4-HYDROXY-3-METHYLBUT-2-EN-1-YL DIPHOSPHATE SYNTHASE"/>
    <property type="match status" value="1"/>
</dbReference>
<dbReference type="PANTHER" id="PTHR30454:SF0">
    <property type="entry name" value="4-HYDROXY-3-METHYLBUT-2-EN-1-YL DIPHOSPHATE SYNTHASE (FERREDOXIN), CHLOROPLASTIC"/>
    <property type="match status" value="1"/>
</dbReference>
<dbReference type="Pfam" id="PF04551">
    <property type="entry name" value="GcpE"/>
    <property type="match status" value="1"/>
</dbReference>
<dbReference type="PIRSF" id="PIRSF004640">
    <property type="entry name" value="IspG"/>
    <property type="match status" value="1"/>
</dbReference>
<dbReference type="SUPFAM" id="SSF51717">
    <property type="entry name" value="Dihydropteroate synthetase-like"/>
    <property type="match status" value="1"/>
</dbReference>
<dbReference type="SUPFAM" id="SSF56014">
    <property type="entry name" value="Nitrite and sulphite reductase 4Fe-4S domain-like"/>
    <property type="match status" value="1"/>
</dbReference>
<proteinExistence type="inferred from homology"/>
<feature type="chain" id="PRO_1000011521" description="4-hydroxy-3-methylbut-2-en-1-yl diphosphate synthase (flavodoxin)">
    <location>
        <begin position="1"/>
        <end position="371"/>
    </location>
</feature>
<feature type="binding site" evidence="1">
    <location>
        <position position="270"/>
    </location>
    <ligand>
        <name>[4Fe-4S] cluster</name>
        <dbReference type="ChEBI" id="CHEBI:49883"/>
    </ligand>
</feature>
<feature type="binding site" evidence="1">
    <location>
        <position position="273"/>
    </location>
    <ligand>
        <name>[4Fe-4S] cluster</name>
        <dbReference type="ChEBI" id="CHEBI:49883"/>
    </ligand>
</feature>
<feature type="binding site" evidence="1">
    <location>
        <position position="305"/>
    </location>
    <ligand>
        <name>[4Fe-4S] cluster</name>
        <dbReference type="ChEBI" id="CHEBI:49883"/>
    </ligand>
</feature>
<feature type="binding site" evidence="1">
    <location>
        <position position="312"/>
    </location>
    <ligand>
        <name>[4Fe-4S] cluster</name>
        <dbReference type="ChEBI" id="CHEBI:49883"/>
    </ligand>
</feature>
<keyword id="KW-0004">4Fe-4S</keyword>
<keyword id="KW-0408">Iron</keyword>
<keyword id="KW-0411">Iron-sulfur</keyword>
<keyword id="KW-0414">Isoprene biosynthesis</keyword>
<keyword id="KW-0479">Metal-binding</keyword>
<keyword id="KW-0560">Oxidoreductase</keyword>
<gene>
    <name evidence="1" type="primary">ispG</name>
    <name type="ordered locus">Shewana3_1229</name>
</gene>
<organism>
    <name type="scientific">Shewanella sp. (strain ANA-3)</name>
    <dbReference type="NCBI Taxonomy" id="94122"/>
    <lineage>
        <taxon>Bacteria</taxon>
        <taxon>Pseudomonadati</taxon>
        <taxon>Pseudomonadota</taxon>
        <taxon>Gammaproteobacteria</taxon>
        <taxon>Alteromonadales</taxon>
        <taxon>Shewanellaceae</taxon>
        <taxon>Shewanella</taxon>
    </lineage>
</organism>
<accession>A0KUJ5</accession>
<comment type="function">
    <text evidence="1">Converts 2C-methyl-D-erythritol 2,4-cyclodiphosphate (ME-2,4cPP) into 1-hydroxy-2-methyl-2-(E)-butenyl 4-diphosphate.</text>
</comment>
<comment type="catalytic activity">
    <reaction evidence="1">
        <text>(2E)-4-hydroxy-3-methylbut-2-enyl diphosphate + oxidized [flavodoxin] + H2O + 2 H(+) = 2-C-methyl-D-erythritol 2,4-cyclic diphosphate + reduced [flavodoxin]</text>
        <dbReference type="Rhea" id="RHEA:43604"/>
        <dbReference type="Rhea" id="RHEA-COMP:10622"/>
        <dbReference type="Rhea" id="RHEA-COMP:10623"/>
        <dbReference type="ChEBI" id="CHEBI:15377"/>
        <dbReference type="ChEBI" id="CHEBI:15378"/>
        <dbReference type="ChEBI" id="CHEBI:57618"/>
        <dbReference type="ChEBI" id="CHEBI:58210"/>
        <dbReference type="ChEBI" id="CHEBI:58483"/>
        <dbReference type="ChEBI" id="CHEBI:128753"/>
        <dbReference type="EC" id="1.17.7.3"/>
    </reaction>
</comment>
<comment type="cofactor">
    <cofactor evidence="1">
        <name>[4Fe-4S] cluster</name>
        <dbReference type="ChEBI" id="CHEBI:49883"/>
    </cofactor>
    <text evidence="1">Binds 1 [4Fe-4S] cluster.</text>
</comment>
<comment type="pathway">
    <text evidence="1">Isoprenoid biosynthesis; isopentenyl diphosphate biosynthesis via DXP pathway; isopentenyl diphosphate from 1-deoxy-D-xylulose 5-phosphate: step 5/6.</text>
</comment>
<comment type="similarity">
    <text evidence="1">Belongs to the IspG family.</text>
</comment>
<protein>
    <recommendedName>
        <fullName evidence="1">4-hydroxy-3-methylbut-2-en-1-yl diphosphate synthase (flavodoxin)</fullName>
        <ecNumber evidence="1">1.17.7.3</ecNumber>
    </recommendedName>
    <alternativeName>
        <fullName evidence="1">1-hydroxy-2-methyl-2-(E)-butenyl 4-diphosphate synthase</fullName>
    </alternativeName>
</protein>
<evidence type="ECO:0000255" key="1">
    <source>
        <dbReference type="HAMAP-Rule" id="MF_00159"/>
    </source>
</evidence>
<name>ISPG_SHESA</name>
<sequence>MYNETPIKRRPSTRIYVGNVPIGDGAPIAVQSMTNTKTTDVEATVAQIRALEKVGADIVRVSVPTMDAAEAFKVIKQSVSVPLVADIHFDYRIALKVAEYGVDCLRINPGNIGNEERIRSVVECARDKNIPIRIGVNGGSLEKDLMDKYKEPTPEALLESAMRHVDILDRLNFDQFKVSVKASDVFLAVESYRLLAKQIRQPLHLGITEAGGARAGAVKSAVGLGMLLAEGIGDTLRISLAADPVEEIKVGFDILKSLRIRSRGINFIACPSCSRQEFDVISTVNELERRLEDVTTAMDVSIIGCVVNGPGEALVSHIGLTGGHRKSGYYDEGERQKERFDNDNLVDSLEAKIRAKASQMANRIQVKDTTE</sequence>